<sequence>MSTPALLVLADGSVFHGTSIGYEGSTSGEVVFNTSMTGYQEILTDPSYCKQIVTLTYPHIGNTGTNAEDEESRSVYAAGLIIRDLPLLHSNFRASESLHDYLVRNKTVAIADIDTRRLTTLLREKGAQGGAILTGADATIEKAQELIAAFGSMVGKDLAKEVSCTETYEWTEGEWALGKGFVTPDEQPYHVVAYDFGVKTNILRMLASRGCRLTVVPAQTSAEDVLALNPDGVFLSNGPGDPEPCTYAIKAVQKLIESGKPIFGICLGHQLISLAIGAKTLKMRFSHHGANHPVQDLDSGKVVITSQNHGFAVDADTLPANARITHKSLFDNTLQGIELTDKPVFCFQGHPEASPGPQDVGYLFDKFIGNMKAAKRA</sequence>
<dbReference type="EC" id="6.3.5.5" evidence="1"/>
<dbReference type="EMBL" id="AE002098">
    <property type="protein sequence ID" value="AAF42183.1"/>
    <property type="molecule type" value="Genomic_DNA"/>
</dbReference>
<dbReference type="PIR" id="F81034">
    <property type="entry name" value="F81034"/>
</dbReference>
<dbReference type="RefSeq" id="NP_274845.1">
    <property type="nucleotide sequence ID" value="NC_003112.2"/>
</dbReference>
<dbReference type="RefSeq" id="WP_002244304.1">
    <property type="nucleotide sequence ID" value="NC_003112.2"/>
</dbReference>
<dbReference type="SMR" id="Q9JXX4"/>
<dbReference type="FunCoup" id="Q9JXX4">
    <property type="interactions" value="558"/>
</dbReference>
<dbReference type="STRING" id="122586.NMB1849"/>
<dbReference type="PaxDb" id="122586-NMB1849"/>
<dbReference type="KEGG" id="nme:NMB1849"/>
<dbReference type="PATRIC" id="fig|122586.8.peg.2366"/>
<dbReference type="HOGENOM" id="CLU_035901_2_1_4"/>
<dbReference type="InParanoid" id="Q9JXX4"/>
<dbReference type="OrthoDB" id="9804328at2"/>
<dbReference type="UniPathway" id="UPA00068">
    <property type="reaction ID" value="UER00171"/>
</dbReference>
<dbReference type="UniPathway" id="UPA00070">
    <property type="reaction ID" value="UER00115"/>
</dbReference>
<dbReference type="Proteomes" id="UP000000425">
    <property type="component" value="Chromosome"/>
</dbReference>
<dbReference type="GO" id="GO:0005524">
    <property type="term" value="F:ATP binding"/>
    <property type="evidence" value="ECO:0007669"/>
    <property type="project" value="UniProtKB-UniRule"/>
</dbReference>
<dbReference type="GO" id="GO:0004088">
    <property type="term" value="F:carbamoyl-phosphate synthase (glutamine-hydrolyzing) activity"/>
    <property type="evidence" value="ECO:0007669"/>
    <property type="project" value="UniProtKB-UniRule"/>
</dbReference>
<dbReference type="GO" id="GO:0004359">
    <property type="term" value="F:glutaminase activity"/>
    <property type="evidence" value="ECO:0007669"/>
    <property type="project" value="RHEA"/>
</dbReference>
<dbReference type="GO" id="GO:0006207">
    <property type="term" value="P:'de novo' pyrimidine nucleobase biosynthetic process"/>
    <property type="evidence" value="ECO:0007669"/>
    <property type="project" value="InterPro"/>
</dbReference>
<dbReference type="GO" id="GO:0044205">
    <property type="term" value="P:'de novo' UMP biosynthetic process"/>
    <property type="evidence" value="ECO:0007669"/>
    <property type="project" value="UniProtKB-UniRule"/>
</dbReference>
<dbReference type="GO" id="GO:0006541">
    <property type="term" value="P:glutamine metabolic process"/>
    <property type="evidence" value="ECO:0007669"/>
    <property type="project" value="InterPro"/>
</dbReference>
<dbReference type="GO" id="GO:0006526">
    <property type="term" value="P:L-arginine biosynthetic process"/>
    <property type="evidence" value="ECO:0007669"/>
    <property type="project" value="UniProtKB-UniRule"/>
</dbReference>
<dbReference type="CDD" id="cd01744">
    <property type="entry name" value="GATase1_CPSase"/>
    <property type="match status" value="1"/>
</dbReference>
<dbReference type="FunFam" id="3.40.50.880:FF:000011">
    <property type="entry name" value="Carbamoyl-phosphate synthase small chain"/>
    <property type="match status" value="1"/>
</dbReference>
<dbReference type="FunFam" id="3.50.30.20:FF:000001">
    <property type="entry name" value="Carbamoyl-phosphate synthase small chain"/>
    <property type="match status" value="1"/>
</dbReference>
<dbReference type="Gene3D" id="3.40.50.880">
    <property type="match status" value="1"/>
</dbReference>
<dbReference type="Gene3D" id="3.50.30.20">
    <property type="entry name" value="Carbamoyl-phosphate synthase small subunit, N-terminal domain"/>
    <property type="match status" value="1"/>
</dbReference>
<dbReference type="HAMAP" id="MF_01209">
    <property type="entry name" value="CPSase_S_chain"/>
    <property type="match status" value="1"/>
</dbReference>
<dbReference type="InterPro" id="IPR050472">
    <property type="entry name" value="Anth_synth/Amidotransfase"/>
</dbReference>
<dbReference type="InterPro" id="IPR006274">
    <property type="entry name" value="CarbamoylP_synth_ssu"/>
</dbReference>
<dbReference type="InterPro" id="IPR002474">
    <property type="entry name" value="CarbamoylP_synth_ssu_N"/>
</dbReference>
<dbReference type="InterPro" id="IPR036480">
    <property type="entry name" value="CarbP_synth_ssu_N_sf"/>
</dbReference>
<dbReference type="InterPro" id="IPR029062">
    <property type="entry name" value="Class_I_gatase-like"/>
</dbReference>
<dbReference type="InterPro" id="IPR035686">
    <property type="entry name" value="CPSase_GATase1"/>
</dbReference>
<dbReference type="InterPro" id="IPR017926">
    <property type="entry name" value="GATASE"/>
</dbReference>
<dbReference type="NCBIfam" id="TIGR01368">
    <property type="entry name" value="CPSaseIIsmall"/>
    <property type="match status" value="1"/>
</dbReference>
<dbReference type="NCBIfam" id="NF009475">
    <property type="entry name" value="PRK12838.1"/>
    <property type="match status" value="1"/>
</dbReference>
<dbReference type="PANTHER" id="PTHR43418:SF7">
    <property type="entry name" value="CARBAMOYL-PHOSPHATE SYNTHASE SMALL CHAIN"/>
    <property type="match status" value="1"/>
</dbReference>
<dbReference type="PANTHER" id="PTHR43418">
    <property type="entry name" value="MULTIFUNCTIONAL TRYPTOPHAN BIOSYNTHESIS PROTEIN-RELATED"/>
    <property type="match status" value="1"/>
</dbReference>
<dbReference type="Pfam" id="PF00988">
    <property type="entry name" value="CPSase_sm_chain"/>
    <property type="match status" value="1"/>
</dbReference>
<dbReference type="Pfam" id="PF00117">
    <property type="entry name" value="GATase"/>
    <property type="match status" value="1"/>
</dbReference>
<dbReference type="PRINTS" id="PR00099">
    <property type="entry name" value="CPSGATASE"/>
</dbReference>
<dbReference type="PRINTS" id="PR00096">
    <property type="entry name" value="GATASE"/>
</dbReference>
<dbReference type="SMART" id="SM01097">
    <property type="entry name" value="CPSase_sm_chain"/>
    <property type="match status" value="1"/>
</dbReference>
<dbReference type="SUPFAM" id="SSF52021">
    <property type="entry name" value="Carbamoyl phosphate synthetase, small subunit N-terminal domain"/>
    <property type="match status" value="1"/>
</dbReference>
<dbReference type="SUPFAM" id="SSF52317">
    <property type="entry name" value="Class I glutamine amidotransferase-like"/>
    <property type="match status" value="1"/>
</dbReference>
<dbReference type="PROSITE" id="PS51273">
    <property type="entry name" value="GATASE_TYPE_1"/>
    <property type="match status" value="1"/>
</dbReference>
<proteinExistence type="inferred from homology"/>
<evidence type="ECO:0000255" key="1">
    <source>
        <dbReference type="HAMAP-Rule" id="MF_01209"/>
    </source>
</evidence>
<keyword id="KW-0028">Amino-acid biosynthesis</keyword>
<keyword id="KW-0055">Arginine biosynthesis</keyword>
<keyword id="KW-0067">ATP-binding</keyword>
<keyword id="KW-0315">Glutamine amidotransferase</keyword>
<keyword id="KW-0436">Ligase</keyword>
<keyword id="KW-0547">Nucleotide-binding</keyword>
<keyword id="KW-0665">Pyrimidine biosynthesis</keyword>
<keyword id="KW-1185">Reference proteome</keyword>
<name>CARA_NEIMB</name>
<feature type="chain" id="PRO_0000112299" description="Carbamoyl phosphate synthase small chain">
    <location>
        <begin position="1"/>
        <end position="377"/>
    </location>
</feature>
<feature type="domain" description="Glutamine amidotransferase type-1" evidence="1">
    <location>
        <begin position="190"/>
        <end position="377"/>
    </location>
</feature>
<feature type="region of interest" description="CPSase" evidence="1">
    <location>
        <begin position="1"/>
        <end position="186"/>
    </location>
</feature>
<feature type="active site" description="Nucleophile" evidence="1">
    <location>
        <position position="266"/>
    </location>
</feature>
<feature type="active site" evidence="1">
    <location>
        <position position="350"/>
    </location>
</feature>
<feature type="active site" evidence="1">
    <location>
        <position position="352"/>
    </location>
</feature>
<feature type="binding site" evidence="1">
    <location>
        <position position="47"/>
    </location>
    <ligand>
        <name>L-glutamine</name>
        <dbReference type="ChEBI" id="CHEBI:58359"/>
    </ligand>
</feature>
<feature type="binding site" evidence="1">
    <location>
        <position position="238"/>
    </location>
    <ligand>
        <name>L-glutamine</name>
        <dbReference type="ChEBI" id="CHEBI:58359"/>
    </ligand>
</feature>
<feature type="binding site" evidence="1">
    <location>
        <position position="240"/>
    </location>
    <ligand>
        <name>L-glutamine</name>
        <dbReference type="ChEBI" id="CHEBI:58359"/>
    </ligand>
</feature>
<feature type="binding site" evidence="1">
    <location>
        <position position="267"/>
    </location>
    <ligand>
        <name>L-glutamine</name>
        <dbReference type="ChEBI" id="CHEBI:58359"/>
    </ligand>
</feature>
<feature type="binding site" evidence="1">
    <location>
        <position position="270"/>
    </location>
    <ligand>
        <name>L-glutamine</name>
        <dbReference type="ChEBI" id="CHEBI:58359"/>
    </ligand>
</feature>
<feature type="binding site" evidence="1">
    <location>
        <position position="308"/>
    </location>
    <ligand>
        <name>L-glutamine</name>
        <dbReference type="ChEBI" id="CHEBI:58359"/>
    </ligand>
</feature>
<feature type="binding site" evidence="1">
    <location>
        <position position="310"/>
    </location>
    <ligand>
        <name>L-glutamine</name>
        <dbReference type="ChEBI" id="CHEBI:58359"/>
    </ligand>
</feature>
<feature type="binding site" evidence="1">
    <location>
        <position position="311"/>
    </location>
    <ligand>
        <name>L-glutamine</name>
        <dbReference type="ChEBI" id="CHEBI:58359"/>
    </ligand>
</feature>
<gene>
    <name evidence="1" type="primary">carA</name>
    <name type="ordered locus">NMB1849</name>
</gene>
<reference key="1">
    <citation type="journal article" date="2000" name="Science">
        <title>Complete genome sequence of Neisseria meningitidis serogroup B strain MC58.</title>
        <authorList>
            <person name="Tettelin H."/>
            <person name="Saunders N.J."/>
            <person name="Heidelberg J.F."/>
            <person name="Jeffries A.C."/>
            <person name="Nelson K.E."/>
            <person name="Eisen J.A."/>
            <person name="Ketchum K.A."/>
            <person name="Hood D.W."/>
            <person name="Peden J.F."/>
            <person name="Dodson R.J."/>
            <person name="Nelson W.C."/>
            <person name="Gwinn M.L."/>
            <person name="DeBoy R.T."/>
            <person name="Peterson J.D."/>
            <person name="Hickey E.K."/>
            <person name="Haft D.H."/>
            <person name="Salzberg S.L."/>
            <person name="White O."/>
            <person name="Fleischmann R.D."/>
            <person name="Dougherty B.A."/>
            <person name="Mason T.M."/>
            <person name="Ciecko A."/>
            <person name="Parksey D.S."/>
            <person name="Blair E."/>
            <person name="Cittone H."/>
            <person name="Clark E.B."/>
            <person name="Cotton M.D."/>
            <person name="Utterback T.R."/>
            <person name="Khouri H.M."/>
            <person name="Qin H."/>
            <person name="Vamathevan J.J."/>
            <person name="Gill J."/>
            <person name="Scarlato V."/>
            <person name="Masignani V."/>
            <person name="Pizza M."/>
            <person name="Grandi G."/>
            <person name="Sun L."/>
            <person name="Smith H.O."/>
            <person name="Fraser C.M."/>
            <person name="Moxon E.R."/>
            <person name="Rappuoli R."/>
            <person name="Venter J.C."/>
        </authorList>
    </citation>
    <scope>NUCLEOTIDE SEQUENCE [LARGE SCALE GENOMIC DNA]</scope>
    <source>
        <strain>ATCC BAA-335 / MC58</strain>
    </source>
</reference>
<accession>Q9JXX4</accession>
<comment type="function">
    <text evidence="1">Small subunit of the glutamine-dependent carbamoyl phosphate synthetase (CPSase). CPSase catalyzes the formation of carbamoyl phosphate from the ammonia moiety of glutamine, carbonate, and phosphate donated by ATP, constituting the first step of 2 biosynthetic pathways, one leading to arginine and/or urea and the other to pyrimidine nucleotides. The small subunit (glutamine amidotransferase) binds and cleaves glutamine to supply the large subunit with the substrate ammonia.</text>
</comment>
<comment type="catalytic activity">
    <reaction evidence="1">
        <text>hydrogencarbonate + L-glutamine + 2 ATP + H2O = carbamoyl phosphate + L-glutamate + 2 ADP + phosphate + 2 H(+)</text>
        <dbReference type="Rhea" id="RHEA:18633"/>
        <dbReference type="ChEBI" id="CHEBI:15377"/>
        <dbReference type="ChEBI" id="CHEBI:15378"/>
        <dbReference type="ChEBI" id="CHEBI:17544"/>
        <dbReference type="ChEBI" id="CHEBI:29985"/>
        <dbReference type="ChEBI" id="CHEBI:30616"/>
        <dbReference type="ChEBI" id="CHEBI:43474"/>
        <dbReference type="ChEBI" id="CHEBI:58228"/>
        <dbReference type="ChEBI" id="CHEBI:58359"/>
        <dbReference type="ChEBI" id="CHEBI:456216"/>
        <dbReference type="EC" id="6.3.5.5"/>
    </reaction>
</comment>
<comment type="catalytic activity">
    <molecule>Carbamoyl phosphate synthase small chain</molecule>
    <reaction evidence="1">
        <text>L-glutamine + H2O = L-glutamate + NH4(+)</text>
        <dbReference type="Rhea" id="RHEA:15889"/>
        <dbReference type="ChEBI" id="CHEBI:15377"/>
        <dbReference type="ChEBI" id="CHEBI:28938"/>
        <dbReference type="ChEBI" id="CHEBI:29985"/>
        <dbReference type="ChEBI" id="CHEBI:58359"/>
    </reaction>
</comment>
<comment type="pathway">
    <text evidence="1">Amino-acid biosynthesis; L-arginine biosynthesis; carbamoyl phosphate from bicarbonate: step 1/1.</text>
</comment>
<comment type="pathway">
    <text evidence="1">Pyrimidine metabolism; UMP biosynthesis via de novo pathway; (S)-dihydroorotate from bicarbonate: step 1/3.</text>
</comment>
<comment type="subunit">
    <text evidence="1">Composed of two chains; the small (or glutamine) chain promotes the hydrolysis of glutamine to ammonia, which is used by the large (or ammonia) chain to synthesize carbamoyl phosphate. Tetramer of heterodimers (alpha,beta)4.</text>
</comment>
<comment type="similarity">
    <text evidence="1">Belongs to the CarA family.</text>
</comment>
<organism>
    <name type="scientific">Neisseria meningitidis serogroup B (strain ATCC BAA-335 / MC58)</name>
    <dbReference type="NCBI Taxonomy" id="122586"/>
    <lineage>
        <taxon>Bacteria</taxon>
        <taxon>Pseudomonadati</taxon>
        <taxon>Pseudomonadota</taxon>
        <taxon>Betaproteobacteria</taxon>
        <taxon>Neisseriales</taxon>
        <taxon>Neisseriaceae</taxon>
        <taxon>Neisseria</taxon>
    </lineage>
</organism>
<protein>
    <recommendedName>
        <fullName evidence="1">Carbamoyl phosphate synthase small chain</fullName>
        <ecNumber evidence="1">6.3.5.5</ecNumber>
    </recommendedName>
    <alternativeName>
        <fullName evidence="1">Carbamoyl phosphate synthetase glutamine chain</fullName>
    </alternativeName>
</protein>